<dbReference type="EMBL" id="AF166114">
    <property type="protein sequence ID" value="AAF43852.1"/>
    <property type="molecule type" value="Genomic_DNA"/>
</dbReference>
<dbReference type="SMR" id="Q9MUP8"/>
<dbReference type="GO" id="GO:0009570">
    <property type="term" value="C:chloroplast stroma"/>
    <property type="evidence" value="ECO:0007669"/>
    <property type="project" value="UniProtKB-SubCell"/>
</dbReference>
<dbReference type="GO" id="GO:0005886">
    <property type="term" value="C:plasma membrane"/>
    <property type="evidence" value="ECO:0007669"/>
    <property type="project" value="TreeGrafter"/>
</dbReference>
<dbReference type="GO" id="GO:0005524">
    <property type="term" value="F:ATP binding"/>
    <property type="evidence" value="ECO:0007669"/>
    <property type="project" value="UniProtKB-KW"/>
</dbReference>
<dbReference type="GO" id="GO:0016887">
    <property type="term" value="F:ATP hydrolysis activity"/>
    <property type="evidence" value="ECO:0007669"/>
    <property type="project" value="InterPro"/>
</dbReference>
<dbReference type="GO" id="GO:0004176">
    <property type="term" value="F:ATP-dependent peptidase activity"/>
    <property type="evidence" value="ECO:0007669"/>
    <property type="project" value="InterPro"/>
</dbReference>
<dbReference type="GO" id="GO:0004222">
    <property type="term" value="F:metalloendopeptidase activity"/>
    <property type="evidence" value="ECO:0007669"/>
    <property type="project" value="InterPro"/>
</dbReference>
<dbReference type="GO" id="GO:0030163">
    <property type="term" value="P:protein catabolic process"/>
    <property type="evidence" value="ECO:0007669"/>
    <property type="project" value="TreeGrafter"/>
</dbReference>
<dbReference type="GO" id="GO:0006508">
    <property type="term" value="P:proteolysis"/>
    <property type="evidence" value="ECO:0007669"/>
    <property type="project" value="InterPro"/>
</dbReference>
<dbReference type="Gene3D" id="1.10.8.60">
    <property type="match status" value="1"/>
</dbReference>
<dbReference type="Gene3D" id="3.40.50.300">
    <property type="entry name" value="P-loop containing nucleotide triphosphate hydrolases"/>
    <property type="match status" value="1"/>
</dbReference>
<dbReference type="Gene3D" id="1.20.58.760">
    <property type="entry name" value="Peptidase M41"/>
    <property type="match status" value="1"/>
</dbReference>
<dbReference type="InterPro" id="IPR003593">
    <property type="entry name" value="AAA+_ATPase"/>
</dbReference>
<dbReference type="InterPro" id="IPR003959">
    <property type="entry name" value="ATPase_AAA_core"/>
</dbReference>
<dbReference type="InterPro" id="IPR003960">
    <property type="entry name" value="ATPase_AAA_CS"/>
</dbReference>
<dbReference type="InterPro" id="IPR027417">
    <property type="entry name" value="P-loop_NTPase"/>
</dbReference>
<dbReference type="InterPro" id="IPR000642">
    <property type="entry name" value="Peptidase_M41"/>
</dbReference>
<dbReference type="InterPro" id="IPR037219">
    <property type="entry name" value="Peptidase_M41-like"/>
</dbReference>
<dbReference type="PANTHER" id="PTHR23076:SF97">
    <property type="entry name" value="ATP-DEPENDENT ZINC METALLOPROTEASE YME1L1"/>
    <property type="match status" value="1"/>
</dbReference>
<dbReference type="PANTHER" id="PTHR23076">
    <property type="entry name" value="METALLOPROTEASE M41 FTSH"/>
    <property type="match status" value="1"/>
</dbReference>
<dbReference type="Pfam" id="PF00004">
    <property type="entry name" value="AAA"/>
    <property type="match status" value="1"/>
</dbReference>
<dbReference type="Pfam" id="PF01434">
    <property type="entry name" value="Peptidase_M41"/>
    <property type="match status" value="1"/>
</dbReference>
<dbReference type="SMART" id="SM00382">
    <property type="entry name" value="AAA"/>
    <property type="match status" value="1"/>
</dbReference>
<dbReference type="SUPFAM" id="SSF140990">
    <property type="entry name" value="FtsH protease domain-like"/>
    <property type="match status" value="2"/>
</dbReference>
<dbReference type="SUPFAM" id="SSF52540">
    <property type="entry name" value="P-loop containing nucleoside triphosphate hydrolases"/>
    <property type="match status" value="1"/>
</dbReference>
<dbReference type="PROSITE" id="PS00674">
    <property type="entry name" value="AAA"/>
    <property type="match status" value="1"/>
</dbReference>
<feature type="chain" id="PRO_0000223058" description="Protein Ycf2">
    <location>
        <begin position="1"/>
        <end position="890"/>
    </location>
</feature>
<feature type="binding site" evidence="2">
    <location>
        <begin position="385"/>
        <end position="392"/>
    </location>
    <ligand>
        <name>ATP</name>
        <dbReference type="ChEBI" id="CHEBI:30616"/>
    </ligand>
</feature>
<gene>
    <name type="primary">ycf2</name>
</gene>
<geneLocation type="chloroplast"/>
<evidence type="ECO:0000250" key="1"/>
<evidence type="ECO:0000255" key="2"/>
<evidence type="ECO:0000305" key="3"/>
<reference key="1">
    <citation type="journal article" date="2000" name="Nature">
        <title>Ancestral chloroplast genome in Mesostigma viride reveals an early branch of green plant evolution.</title>
        <authorList>
            <person name="Lemieux C."/>
            <person name="Otis C."/>
            <person name="Turmel M."/>
        </authorList>
    </citation>
    <scope>NUCLEOTIDE SEQUENCE [LARGE SCALE GENOMIC DNA]</scope>
    <source>
        <strain>NIES-296 / KY-14 / CCMP 2046</strain>
    </source>
</reference>
<sequence>MQQNHMSLSNMIKEVKEVFFHVPALLIPTRYREIYREIDRAPKLLEQSFYTIFIKVWNITEKVTVTDVFYYSSVEDPLGLQSPRHSRWAQNTDEEQRKQARIIIQSVYKPNSFIRITSNKFTRVLITSLFVLTYFQSNGVFQSFPYFESQINGFLFKKMNNINQLEINSTNTCIIKITDLLTHQKSKELLGNSLPTNSILRWKMHSKISDIKTIFNMPEKWIYLPLGLGLENSEQIFSYRNFDICNLTKNSSNIMKIKNNRTILDPKIDKYPLVLKNKENILFFHKLPIQFFLFPYIVLRIWLAPVFVLWWSYQFNSEEKENIKNNLKNIHDIEISTIQKFVAKAITFRDIGGMESLKQELATVAFLLKQKNYSNSYPMGYLFAGPPGTGKTLMAKAMSYEAETPYLYVEGSQFRCREEGVANARVDDLFKQIQNISPCILYIDEIDSIAERREEANKQLEQLKTIGDSIEGSNINIDQKPSDTVLMQFLIYMDGYKKRNDLIIIGATNRIETLDDAIMRPGRFDRQIVFSPPFFEERKDILRIFLRNTKALVDDTTKTMMAERSIGLNGCDLRLLADNILLLSALESRNQQKTIPVINEDTFDRALERVSRIRHIISNYELAFGKYDFYRTAYHEAGIALIHTLLPECRPVYSVKLFPKPLNDRYLEIERENLKVPSSDIISTNNIDYFVQKIVGLLAGRAAESILFDFYPGQISTYLNKTYDPNIQGAYNIAHHIVEFGLLDSVTGVIHYLNSENENNIKDPFVTKINDLIQNKVTLKTNRELRKYSQAASILDFNEFWYEQDYPWQFDFIKKQYIYSNESSRNLDMEIVSILHTLFQYTYDFLKSNEQLLDHLASLVLKNKSISQKEIHLVVNSYGIKIPTKTWKAW</sequence>
<name>YCF2_MESVI</name>
<organism>
    <name type="scientific">Mesostigma viride</name>
    <name type="common">Green alga</name>
    <dbReference type="NCBI Taxonomy" id="41882"/>
    <lineage>
        <taxon>Eukaryota</taxon>
        <taxon>Viridiplantae</taxon>
        <taxon>Streptophyta</taxon>
        <taxon>Mesostigmatophyceae</taxon>
        <taxon>Mesostigmatales</taxon>
        <taxon>Mesostigmataceae</taxon>
        <taxon>Mesostigma</taxon>
    </lineage>
</organism>
<protein>
    <recommendedName>
        <fullName>Protein Ycf2</fullName>
        <shortName>RF2</shortName>
    </recommendedName>
</protein>
<proteinExistence type="inferred from homology"/>
<keyword id="KW-0067">ATP-binding</keyword>
<keyword id="KW-0150">Chloroplast</keyword>
<keyword id="KW-0547">Nucleotide-binding</keyword>
<keyword id="KW-0934">Plastid</keyword>
<accession>Q9MUP8</accession>
<comment type="function">
    <text>Probable ATPase of unknown function. Its presence in a non-photosynthetic plant (Epifagus virginiana) and experiments in tobacco indicate that it has an essential function which is probably not related to photosynthesis.</text>
</comment>
<comment type="subcellular location">
    <subcellularLocation>
        <location evidence="1">Plastid</location>
        <location evidence="1">Chloroplast stroma</location>
    </subcellularLocation>
</comment>
<comment type="miscellaneous">
    <text>The protein in this organism is about half the size it is in other chloroplasts.</text>
</comment>
<comment type="similarity">
    <text evidence="3">Belongs to the Ycf2 family.</text>
</comment>